<accession>Q59014</accession>
<evidence type="ECO:0000255" key="1">
    <source>
        <dbReference type="PROSITE-ProRule" id="PRU01067"/>
    </source>
</evidence>
<evidence type="ECO:0000305" key="2"/>
<evidence type="ECO:0007829" key="3">
    <source>
        <dbReference type="PDB" id="2EJ9"/>
    </source>
</evidence>
<comment type="catalytic activity">
    <reaction>
        <text>biotin + L-lysyl-[protein] + ATP = N(6)-biotinyl-L-lysyl-[protein] + AMP + diphosphate + H(+)</text>
        <dbReference type="Rhea" id="RHEA:11756"/>
        <dbReference type="Rhea" id="RHEA-COMP:9752"/>
        <dbReference type="Rhea" id="RHEA-COMP:10505"/>
        <dbReference type="ChEBI" id="CHEBI:15378"/>
        <dbReference type="ChEBI" id="CHEBI:29969"/>
        <dbReference type="ChEBI" id="CHEBI:30616"/>
        <dbReference type="ChEBI" id="CHEBI:33019"/>
        <dbReference type="ChEBI" id="CHEBI:57586"/>
        <dbReference type="ChEBI" id="CHEBI:83144"/>
        <dbReference type="ChEBI" id="CHEBI:456215"/>
        <dbReference type="EC" id="6.3.4.15"/>
    </reaction>
</comment>
<comment type="similarity">
    <text evidence="2">Belongs to the biotin--protein ligase family.</text>
</comment>
<dbReference type="EC" id="6.3.4.15"/>
<dbReference type="EMBL" id="L77117">
    <property type="protein sequence ID" value="AAB99640.1"/>
    <property type="molecule type" value="Genomic_DNA"/>
</dbReference>
<dbReference type="PIR" id="B64502">
    <property type="entry name" value="B64502"/>
</dbReference>
<dbReference type="RefSeq" id="WP_010871144.1">
    <property type="nucleotide sequence ID" value="NC_000909.1"/>
</dbReference>
<dbReference type="PDB" id="2EJ9">
    <property type="method" value="X-ray"/>
    <property type="resolution" value="2.00 A"/>
    <property type="chains" value="A=1-237"/>
</dbReference>
<dbReference type="PDBsum" id="2EJ9"/>
<dbReference type="SMR" id="Q59014"/>
<dbReference type="FunCoup" id="Q59014">
    <property type="interactions" value="8"/>
</dbReference>
<dbReference type="STRING" id="243232.MJ_1619"/>
<dbReference type="PaxDb" id="243232-MJ_1619"/>
<dbReference type="EnsemblBacteria" id="AAB99640">
    <property type="protein sequence ID" value="AAB99640"/>
    <property type="gene ID" value="MJ_1619"/>
</dbReference>
<dbReference type="GeneID" id="1452528"/>
<dbReference type="KEGG" id="mja:MJ_1619"/>
<dbReference type="eggNOG" id="arCOG01940">
    <property type="taxonomic scope" value="Archaea"/>
</dbReference>
<dbReference type="HOGENOM" id="CLU_051096_3_1_2"/>
<dbReference type="InParanoid" id="Q59014"/>
<dbReference type="OrthoDB" id="46252at2157"/>
<dbReference type="PhylomeDB" id="Q59014"/>
<dbReference type="EvolutionaryTrace" id="Q59014"/>
<dbReference type="Proteomes" id="UP000000805">
    <property type="component" value="Chromosome"/>
</dbReference>
<dbReference type="GO" id="GO:0005737">
    <property type="term" value="C:cytoplasm"/>
    <property type="evidence" value="ECO:0000318"/>
    <property type="project" value="GO_Central"/>
</dbReference>
<dbReference type="GO" id="GO:0005524">
    <property type="term" value="F:ATP binding"/>
    <property type="evidence" value="ECO:0007669"/>
    <property type="project" value="UniProtKB-KW"/>
</dbReference>
<dbReference type="GO" id="GO:0004077">
    <property type="term" value="F:biotin--[biotin carboxyl-carrier protein] ligase activity"/>
    <property type="evidence" value="ECO:0000318"/>
    <property type="project" value="GO_Central"/>
</dbReference>
<dbReference type="GO" id="GO:0036211">
    <property type="term" value="P:protein modification process"/>
    <property type="evidence" value="ECO:0007669"/>
    <property type="project" value="InterPro"/>
</dbReference>
<dbReference type="CDD" id="cd16442">
    <property type="entry name" value="BPL"/>
    <property type="match status" value="1"/>
</dbReference>
<dbReference type="Gene3D" id="2.30.30.100">
    <property type="match status" value="1"/>
</dbReference>
<dbReference type="Gene3D" id="3.30.930.10">
    <property type="entry name" value="Bira Bifunctional Protein, Domain 2"/>
    <property type="match status" value="1"/>
</dbReference>
<dbReference type="InterPro" id="IPR045864">
    <property type="entry name" value="aa-tRNA-synth_II/BPL/LPL"/>
</dbReference>
<dbReference type="InterPro" id="IPR004408">
    <property type="entry name" value="Biotin_CoA_COase_ligase"/>
</dbReference>
<dbReference type="InterPro" id="IPR003142">
    <property type="entry name" value="BPL_C"/>
</dbReference>
<dbReference type="InterPro" id="IPR004143">
    <property type="entry name" value="BPL_LPL_catalytic"/>
</dbReference>
<dbReference type="NCBIfam" id="TIGR00121">
    <property type="entry name" value="birA_ligase"/>
    <property type="match status" value="1"/>
</dbReference>
<dbReference type="PANTHER" id="PTHR12835">
    <property type="entry name" value="BIOTIN PROTEIN LIGASE"/>
    <property type="match status" value="1"/>
</dbReference>
<dbReference type="PANTHER" id="PTHR12835:SF5">
    <property type="entry name" value="BIOTIN--PROTEIN LIGASE"/>
    <property type="match status" value="1"/>
</dbReference>
<dbReference type="Pfam" id="PF02237">
    <property type="entry name" value="BPL_C"/>
    <property type="match status" value="1"/>
</dbReference>
<dbReference type="Pfam" id="PF03099">
    <property type="entry name" value="BPL_LplA_LipB"/>
    <property type="match status" value="1"/>
</dbReference>
<dbReference type="SUPFAM" id="SSF55681">
    <property type="entry name" value="Class II aaRS and biotin synthetases"/>
    <property type="match status" value="1"/>
</dbReference>
<dbReference type="PROSITE" id="PS51733">
    <property type="entry name" value="BPL_LPL_CATALYTIC"/>
    <property type="match status" value="1"/>
</dbReference>
<sequence length="237" mass="27185">MEIIHLSEIDSTNDYAKELAKEGKRNFIVLADKQNNGKGRWGRVWYSDEGGLYFSMVLDSKLYNPKVINLLVPICIIEVLKNYVDKELGLKFPNDIMVKVNDNYKKLGGILTELTDDYMIIGIGINVNNQIRNEIREIAISLKEITGKELDKVEILSNFLKTFESYLEKLKNKEIDDYEILKKYKKYSITIGKQVKILLSNNEIITGKVYDIDFDGIVLGTEKGIERIPSGICIHVR</sequence>
<gene>
    <name type="ordered locus">MJ1619</name>
</gene>
<keyword id="KW-0002">3D-structure</keyword>
<keyword id="KW-0067">ATP-binding</keyword>
<keyword id="KW-0092">Biotin</keyword>
<keyword id="KW-0436">Ligase</keyword>
<keyword id="KW-0547">Nucleotide-binding</keyword>
<keyword id="KW-1185">Reference proteome</keyword>
<organism>
    <name type="scientific">Methanocaldococcus jannaschii (strain ATCC 43067 / DSM 2661 / JAL-1 / JCM 10045 / NBRC 100440)</name>
    <name type="common">Methanococcus jannaschii</name>
    <dbReference type="NCBI Taxonomy" id="243232"/>
    <lineage>
        <taxon>Archaea</taxon>
        <taxon>Methanobacteriati</taxon>
        <taxon>Methanobacteriota</taxon>
        <taxon>Methanomada group</taxon>
        <taxon>Methanococci</taxon>
        <taxon>Methanococcales</taxon>
        <taxon>Methanocaldococcaceae</taxon>
        <taxon>Methanocaldococcus</taxon>
    </lineage>
</organism>
<reference key="1">
    <citation type="journal article" date="1996" name="Science">
        <title>Complete genome sequence of the methanogenic archaeon, Methanococcus jannaschii.</title>
        <authorList>
            <person name="Bult C.J."/>
            <person name="White O."/>
            <person name="Olsen G.J."/>
            <person name="Zhou L."/>
            <person name="Fleischmann R.D."/>
            <person name="Sutton G.G."/>
            <person name="Blake J.A."/>
            <person name="FitzGerald L.M."/>
            <person name="Clayton R.A."/>
            <person name="Gocayne J.D."/>
            <person name="Kerlavage A.R."/>
            <person name="Dougherty B.A."/>
            <person name="Tomb J.-F."/>
            <person name="Adams M.D."/>
            <person name="Reich C.I."/>
            <person name="Overbeek R."/>
            <person name="Kirkness E.F."/>
            <person name="Weinstock K.G."/>
            <person name="Merrick J.M."/>
            <person name="Glodek A."/>
            <person name="Scott J.L."/>
            <person name="Geoghagen N.S.M."/>
            <person name="Weidman J.F."/>
            <person name="Fuhrmann J.L."/>
            <person name="Nguyen D."/>
            <person name="Utterback T.R."/>
            <person name="Kelley J.M."/>
            <person name="Peterson J.D."/>
            <person name="Sadow P.W."/>
            <person name="Hanna M.C."/>
            <person name="Cotton M.D."/>
            <person name="Roberts K.M."/>
            <person name="Hurst M.A."/>
            <person name="Kaine B.P."/>
            <person name="Borodovsky M."/>
            <person name="Klenk H.-P."/>
            <person name="Fraser C.M."/>
            <person name="Smith H.O."/>
            <person name="Woese C.R."/>
            <person name="Venter J.C."/>
        </authorList>
    </citation>
    <scope>NUCLEOTIDE SEQUENCE [LARGE SCALE GENOMIC DNA]</scope>
    <source>
        <strain>ATCC 43067 / DSM 2661 / JAL-1 / JCM 10045 / NBRC 100440</strain>
    </source>
</reference>
<feature type="chain" id="PRO_0000064982" description="Putative biotin ligase">
    <location>
        <begin position="1"/>
        <end position="237"/>
    </location>
</feature>
<feature type="domain" description="BPL/LPL catalytic" evidence="1">
    <location>
        <begin position="1"/>
        <end position="191"/>
    </location>
</feature>
<feature type="strand" evidence="3">
    <location>
        <begin position="2"/>
        <end position="7"/>
    </location>
</feature>
<feature type="helix" evidence="3">
    <location>
        <begin position="12"/>
        <end position="21"/>
    </location>
</feature>
<feature type="strand" evidence="3">
    <location>
        <begin position="26"/>
        <end position="32"/>
    </location>
</feature>
<feature type="strand" evidence="3">
    <location>
        <begin position="34"/>
        <end position="36"/>
    </location>
</feature>
<feature type="helix" evidence="3">
    <location>
        <begin position="40"/>
        <end position="42"/>
    </location>
</feature>
<feature type="strand" evidence="3">
    <location>
        <begin position="51"/>
        <end position="59"/>
    </location>
</feature>
<feature type="helix" evidence="3">
    <location>
        <begin position="65"/>
        <end position="80"/>
    </location>
</feature>
<feature type="turn" evidence="3">
    <location>
        <begin position="81"/>
        <end position="83"/>
    </location>
</feature>
<feature type="strand" evidence="3">
    <location>
        <begin position="88"/>
        <end position="91"/>
    </location>
</feature>
<feature type="turn" evidence="3">
    <location>
        <begin position="92"/>
        <end position="94"/>
    </location>
</feature>
<feature type="strand" evidence="3">
    <location>
        <begin position="95"/>
        <end position="100"/>
    </location>
</feature>
<feature type="strand" evidence="3">
    <location>
        <begin position="103"/>
        <end position="114"/>
    </location>
</feature>
<feature type="strand" evidence="3">
    <location>
        <begin position="116"/>
        <end position="125"/>
    </location>
</feature>
<feature type="strand" evidence="3">
    <location>
        <begin position="127"/>
        <end position="129"/>
    </location>
</feature>
<feature type="helix" evidence="3">
    <location>
        <begin position="133"/>
        <end position="137"/>
    </location>
</feature>
<feature type="helix" evidence="3">
    <location>
        <begin position="142"/>
        <end position="146"/>
    </location>
</feature>
<feature type="helix" evidence="3">
    <location>
        <begin position="152"/>
        <end position="171"/>
    </location>
</feature>
<feature type="helix" evidence="3">
    <location>
        <begin position="177"/>
        <end position="187"/>
    </location>
</feature>
<feature type="strand" evidence="3">
    <location>
        <begin position="188"/>
        <end position="190"/>
    </location>
</feature>
<feature type="strand" evidence="3">
    <location>
        <begin position="194"/>
        <end position="199"/>
    </location>
</feature>
<feature type="strand" evidence="3">
    <location>
        <begin position="204"/>
        <end position="212"/>
    </location>
</feature>
<feature type="strand" evidence="3">
    <location>
        <begin position="214"/>
        <end position="221"/>
    </location>
</feature>
<feature type="strand" evidence="3">
    <location>
        <begin position="224"/>
        <end position="229"/>
    </location>
</feature>
<feature type="helix" evidence="3">
    <location>
        <begin position="230"/>
        <end position="232"/>
    </location>
</feature>
<feature type="strand" evidence="3">
    <location>
        <begin position="233"/>
        <end position="236"/>
    </location>
</feature>
<proteinExistence type="evidence at protein level"/>
<name>BPL_METJA</name>
<protein>
    <recommendedName>
        <fullName>Putative biotin ligase</fullName>
        <ecNumber>6.3.4.15</ecNumber>
    </recommendedName>
</protein>